<name>RPB9_ASFK5</name>
<organism>
    <name type="scientific">African swine fever virus (isolate Pig/Kenya/KEN-50/1950)</name>
    <name type="common">ASFV</name>
    <dbReference type="NCBI Taxonomy" id="561445"/>
    <lineage>
        <taxon>Viruses</taxon>
        <taxon>Varidnaviria</taxon>
        <taxon>Bamfordvirae</taxon>
        <taxon>Nucleocytoviricota</taxon>
        <taxon>Pokkesviricetes</taxon>
        <taxon>Asfuvirales</taxon>
        <taxon>Asfarviridae</taxon>
        <taxon>Asfivirus</taxon>
        <taxon>African swine fever virus</taxon>
    </lineage>
</organism>
<proteinExistence type="inferred from homology"/>
<protein>
    <recommendedName>
        <fullName evidence="3">DNA-directed RNA polymerase RPB9 homolog</fullName>
        <shortName evidence="5">RPB9 homolog</shortName>
    </recommendedName>
</protein>
<dbReference type="EMBL" id="AY261360">
    <property type="status" value="NOT_ANNOTATED_CDS"/>
    <property type="molecule type" value="Genomic_DNA"/>
</dbReference>
<dbReference type="SMR" id="P0CA22"/>
<dbReference type="Proteomes" id="UP000000861">
    <property type="component" value="Segment"/>
</dbReference>
<dbReference type="GO" id="GO:0030430">
    <property type="term" value="C:host cell cytoplasm"/>
    <property type="evidence" value="ECO:0007669"/>
    <property type="project" value="UniProtKB-SubCell"/>
</dbReference>
<dbReference type="GO" id="GO:0008270">
    <property type="term" value="F:zinc ion binding"/>
    <property type="evidence" value="ECO:0007669"/>
    <property type="project" value="UniProtKB-KW"/>
</dbReference>
<reference key="1">
    <citation type="submission" date="2003-03" db="EMBL/GenBank/DDBJ databases">
        <title>African swine fever virus genomes.</title>
        <authorList>
            <person name="Kutish G.F."/>
            <person name="Rock D.L."/>
        </authorList>
    </citation>
    <scope>NUCLEOTIDE SEQUENCE [LARGE SCALE GENOMIC DNA]</scope>
</reference>
<organismHost>
    <name type="scientific">Ornithodoros</name>
    <name type="common">relapsing fever ticks</name>
    <dbReference type="NCBI Taxonomy" id="6937"/>
</organismHost>
<organismHost>
    <name type="scientific">Phacochoerus aethiopicus</name>
    <name type="common">Warthog</name>
    <dbReference type="NCBI Taxonomy" id="85517"/>
</organismHost>
<organismHost>
    <name type="scientific">Phacochoerus africanus</name>
    <name type="common">Warthog</name>
    <dbReference type="NCBI Taxonomy" id="41426"/>
</organismHost>
<organismHost>
    <name type="scientific">Potamochoerus larvatus</name>
    <name type="common">Bushpig</name>
    <dbReference type="NCBI Taxonomy" id="273792"/>
</organismHost>
<organismHost>
    <name type="scientific">Sus scrofa</name>
    <name type="common">Pig</name>
    <dbReference type="NCBI Taxonomy" id="9823"/>
</organismHost>
<feature type="chain" id="PRO_0000373486" description="DNA-directed RNA polymerase RPB9 homolog">
    <location>
        <begin position="1"/>
        <end position="105"/>
    </location>
</feature>
<feature type="zinc finger region" description="C4-type; atypical" evidence="4">
    <location>
        <begin position="4"/>
        <end position="26"/>
    </location>
</feature>
<feature type="binding site" evidence="1">
    <location>
        <position position="4"/>
    </location>
    <ligand>
        <name>Zn(2+)</name>
        <dbReference type="ChEBI" id="CHEBI:29105"/>
        <label>1</label>
    </ligand>
</feature>
<feature type="binding site" evidence="1">
    <location>
        <position position="7"/>
    </location>
    <ligand>
        <name>Zn(2+)</name>
        <dbReference type="ChEBI" id="CHEBI:29105"/>
        <label>1</label>
    </ligand>
</feature>
<feature type="binding site" evidence="1">
    <location>
        <position position="24"/>
    </location>
    <ligand>
        <name>Zn(2+)</name>
        <dbReference type="ChEBI" id="CHEBI:29105"/>
        <label>1</label>
    </ligand>
</feature>
<feature type="binding site" evidence="1">
    <location>
        <position position="26"/>
    </location>
    <ligand>
        <name>Zn(2+)</name>
        <dbReference type="ChEBI" id="CHEBI:29105"/>
        <label>1</label>
    </ligand>
</feature>
<feature type="binding site" evidence="1">
    <location>
        <position position="73"/>
    </location>
    <ligand>
        <name>Zn(2+)</name>
        <dbReference type="ChEBI" id="CHEBI:29105"/>
        <label>2</label>
    </ligand>
</feature>
<feature type="binding site" evidence="1">
    <location>
        <position position="76"/>
    </location>
    <ligand>
        <name>Zn(2+)</name>
        <dbReference type="ChEBI" id="CHEBI:29105"/>
        <label>2</label>
    </ligand>
</feature>
<feature type="binding site" evidence="1">
    <location>
        <position position="96"/>
    </location>
    <ligand>
        <name>Zn(2+)</name>
        <dbReference type="ChEBI" id="CHEBI:29105"/>
        <label>2</label>
    </ligand>
</feature>
<gene>
    <name type="ordered locus">Ken-077</name>
</gene>
<accession>P0CA22</accession>
<comment type="function">
    <text evidence="2">Component of the DNA-directed RNA polymerase (RNAP) that catalyzes the transcription in the cytoplasm of viral DNA into RNA using the four ribonucleoside triphosphates as substrates.</text>
</comment>
<comment type="subunit">
    <text evidence="3">Part of the viral DNA-directed RNA polymerase that consists of 8 polII-like subunits (RPB1, RPB2, RPB3, RPB5, RPB6, RPB7, RPB9, RPB10), a capping enzyme and a termination factor.</text>
</comment>
<comment type="subcellular location">
    <subcellularLocation>
        <location evidence="5">Host cytoplasm</location>
    </subcellularLocation>
</comment>
<comment type="induction">
    <text evidence="5">Expressed in the early phase of the viral replicative cycle.</text>
</comment>
<comment type="similarity">
    <text evidence="5">Belongs to the Asfivirus DNA-directed RNA polymerase RPB9 homolog family.</text>
</comment>
<keyword id="KW-1035">Host cytoplasm</keyword>
<keyword id="KW-0479">Metal-binding</keyword>
<keyword id="KW-0862">Zinc</keyword>
<keyword id="KW-0863">Zinc-finger</keyword>
<sequence length="105" mass="11787">MKICKACSSCMVRTYVDGNIIFRCSCGESVQGDSQNLLVSSKVYHTGEMEDKYKIFIKNAPFDPTNCQIKKDCPNCHLDYLTQICIGSQKIIILVCRCGYTSNRG</sequence>
<evidence type="ECO:0000250" key="1">
    <source>
        <dbReference type="UniProtKB" id="P27999"/>
    </source>
</evidence>
<evidence type="ECO:0000250" key="2">
    <source>
        <dbReference type="UniProtKB" id="P36954"/>
    </source>
</evidence>
<evidence type="ECO:0000250" key="3">
    <source>
        <dbReference type="UniProtKB" id="Q65157"/>
    </source>
</evidence>
<evidence type="ECO:0000255" key="4"/>
<evidence type="ECO:0000305" key="5"/>